<keyword id="KW-1185">Reference proteome</keyword>
<keyword id="KW-0687">Ribonucleoprotein</keyword>
<keyword id="KW-0689">Ribosomal protein</keyword>
<keyword id="KW-0694">RNA-binding</keyword>
<keyword id="KW-0699">rRNA-binding</keyword>
<dbReference type="EMBL" id="CP000382">
    <property type="protein sequence ID" value="ABK61280.1"/>
    <property type="molecule type" value="Genomic_DNA"/>
</dbReference>
<dbReference type="RefSeq" id="WP_011721224.1">
    <property type="nucleotide sequence ID" value="NC_008593.1"/>
</dbReference>
<dbReference type="SMR" id="A0PXW0"/>
<dbReference type="STRING" id="386415.NT01CX_1129"/>
<dbReference type="KEGG" id="cno:NT01CX_1129"/>
<dbReference type="eggNOG" id="COG0096">
    <property type="taxonomic scope" value="Bacteria"/>
</dbReference>
<dbReference type="HOGENOM" id="CLU_098428_0_2_9"/>
<dbReference type="Proteomes" id="UP000008220">
    <property type="component" value="Chromosome"/>
</dbReference>
<dbReference type="GO" id="GO:1990904">
    <property type="term" value="C:ribonucleoprotein complex"/>
    <property type="evidence" value="ECO:0007669"/>
    <property type="project" value="UniProtKB-KW"/>
</dbReference>
<dbReference type="GO" id="GO:0005840">
    <property type="term" value="C:ribosome"/>
    <property type="evidence" value="ECO:0007669"/>
    <property type="project" value="UniProtKB-KW"/>
</dbReference>
<dbReference type="GO" id="GO:0019843">
    <property type="term" value="F:rRNA binding"/>
    <property type="evidence" value="ECO:0007669"/>
    <property type="project" value="UniProtKB-UniRule"/>
</dbReference>
<dbReference type="GO" id="GO:0003735">
    <property type="term" value="F:structural constituent of ribosome"/>
    <property type="evidence" value="ECO:0007669"/>
    <property type="project" value="InterPro"/>
</dbReference>
<dbReference type="GO" id="GO:0006412">
    <property type="term" value="P:translation"/>
    <property type="evidence" value="ECO:0007669"/>
    <property type="project" value="UniProtKB-UniRule"/>
</dbReference>
<dbReference type="FunFam" id="3.30.1370.30:FF:000002">
    <property type="entry name" value="30S ribosomal protein S8"/>
    <property type="match status" value="1"/>
</dbReference>
<dbReference type="FunFam" id="3.30.1490.10:FF:000001">
    <property type="entry name" value="30S ribosomal protein S8"/>
    <property type="match status" value="1"/>
</dbReference>
<dbReference type="Gene3D" id="3.30.1370.30">
    <property type="match status" value="1"/>
</dbReference>
<dbReference type="Gene3D" id="3.30.1490.10">
    <property type="match status" value="1"/>
</dbReference>
<dbReference type="HAMAP" id="MF_01302_B">
    <property type="entry name" value="Ribosomal_uS8_B"/>
    <property type="match status" value="1"/>
</dbReference>
<dbReference type="InterPro" id="IPR000630">
    <property type="entry name" value="Ribosomal_uS8"/>
</dbReference>
<dbReference type="InterPro" id="IPR047863">
    <property type="entry name" value="Ribosomal_uS8_CS"/>
</dbReference>
<dbReference type="InterPro" id="IPR035987">
    <property type="entry name" value="Ribosomal_uS8_sf"/>
</dbReference>
<dbReference type="NCBIfam" id="NF001109">
    <property type="entry name" value="PRK00136.1"/>
    <property type="match status" value="1"/>
</dbReference>
<dbReference type="PANTHER" id="PTHR11758">
    <property type="entry name" value="40S RIBOSOMAL PROTEIN S15A"/>
    <property type="match status" value="1"/>
</dbReference>
<dbReference type="Pfam" id="PF00410">
    <property type="entry name" value="Ribosomal_S8"/>
    <property type="match status" value="1"/>
</dbReference>
<dbReference type="SUPFAM" id="SSF56047">
    <property type="entry name" value="Ribosomal protein S8"/>
    <property type="match status" value="1"/>
</dbReference>
<dbReference type="PROSITE" id="PS00053">
    <property type="entry name" value="RIBOSOMAL_S8"/>
    <property type="match status" value="1"/>
</dbReference>
<feature type="chain" id="PRO_0000290822" description="Small ribosomal subunit protein uS8">
    <location>
        <begin position="1"/>
        <end position="131"/>
    </location>
</feature>
<reference key="1">
    <citation type="journal article" date="2006" name="Nat. Biotechnol.">
        <title>The genome and transcriptomes of the anti-tumor agent Clostridium novyi-NT.</title>
        <authorList>
            <person name="Bettegowda C."/>
            <person name="Huang X."/>
            <person name="Lin J."/>
            <person name="Cheong I."/>
            <person name="Kohli M."/>
            <person name="Szabo S.A."/>
            <person name="Zhang X."/>
            <person name="Diaz L.A. Jr."/>
            <person name="Velculescu V.E."/>
            <person name="Parmigiani G."/>
            <person name="Kinzler K.W."/>
            <person name="Vogelstein B."/>
            <person name="Zhou S."/>
        </authorList>
    </citation>
    <scope>NUCLEOTIDE SEQUENCE [LARGE SCALE GENOMIC DNA]</scope>
    <source>
        <strain>NT</strain>
    </source>
</reference>
<name>RS8_CLONN</name>
<gene>
    <name evidence="1" type="primary">rpsH</name>
    <name type="ordered locus">NT01CX_1129</name>
</gene>
<accession>A0PXW0</accession>
<comment type="function">
    <text evidence="1">One of the primary rRNA binding proteins, it binds directly to 16S rRNA central domain where it helps coordinate assembly of the platform of the 30S subunit.</text>
</comment>
<comment type="subunit">
    <text evidence="1">Part of the 30S ribosomal subunit. Contacts proteins S5 and S12.</text>
</comment>
<comment type="similarity">
    <text evidence="1">Belongs to the universal ribosomal protein uS8 family.</text>
</comment>
<evidence type="ECO:0000255" key="1">
    <source>
        <dbReference type="HAMAP-Rule" id="MF_01302"/>
    </source>
</evidence>
<evidence type="ECO:0000305" key="2"/>
<proteinExistence type="inferred from homology"/>
<protein>
    <recommendedName>
        <fullName evidence="1">Small ribosomal subunit protein uS8</fullName>
    </recommendedName>
    <alternativeName>
        <fullName evidence="2">30S ribosomal protein S8</fullName>
    </alternativeName>
</protein>
<organism>
    <name type="scientific">Clostridium novyi (strain NT)</name>
    <dbReference type="NCBI Taxonomy" id="386415"/>
    <lineage>
        <taxon>Bacteria</taxon>
        <taxon>Bacillati</taxon>
        <taxon>Bacillota</taxon>
        <taxon>Clostridia</taxon>
        <taxon>Eubacteriales</taxon>
        <taxon>Clostridiaceae</taxon>
        <taxon>Clostridium</taxon>
    </lineage>
</organism>
<sequence length="131" mass="14524">MVMTDPIADMLTRIRNANIVRHEVVEVPSSNVKKSIANILVQEGYVKDIEEYADGAVPMIRLSLKYNGKERIITGLKRISKPGLRVYCKKDNIPKVLNGLGVAIISTSKGIVTDREARKLGLGGEVICYVW</sequence>